<organism>
    <name type="scientific">Enterobacter sp. (strain 638)</name>
    <dbReference type="NCBI Taxonomy" id="399742"/>
    <lineage>
        <taxon>Bacteria</taxon>
        <taxon>Pseudomonadati</taxon>
        <taxon>Pseudomonadota</taxon>
        <taxon>Gammaproteobacteria</taxon>
        <taxon>Enterobacterales</taxon>
        <taxon>Enterobacteriaceae</taxon>
        <taxon>Enterobacter</taxon>
    </lineage>
</organism>
<accession>A4W7Z4</accession>
<gene>
    <name evidence="1" type="primary">mtnB</name>
    <name type="ordered locus">Ent638_1143</name>
</gene>
<protein>
    <recommendedName>
        <fullName evidence="1">Methylthioribulose-1-phosphate dehydratase</fullName>
        <shortName evidence="1">MTRu-1-P dehydratase</shortName>
        <ecNumber evidence="1">4.2.1.109</ecNumber>
    </recommendedName>
</protein>
<reference key="1">
    <citation type="journal article" date="2010" name="PLoS Genet.">
        <title>Genome sequence of the plant growth promoting endophytic bacterium Enterobacter sp. 638.</title>
        <authorList>
            <person name="Taghavi S."/>
            <person name="van der Lelie D."/>
            <person name="Hoffman A."/>
            <person name="Zhang Y.B."/>
            <person name="Walla M.D."/>
            <person name="Vangronsveld J."/>
            <person name="Newman L."/>
            <person name="Monchy S."/>
        </authorList>
    </citation>
    <scope>NUCLEOTIDE SEQUENCE [LARGE SCALE GENOMIC DNA]</scope>
    <source>
        <strain>638</strain>
    </source>
</reference>
<name>MTNB_ENT38</name>
<keyword id="KW-0028">Amino-acid biosynthesis</keyword>
<keyword id="KW-0456">Lyase</keyword>
<keyword id="KW-0479">Metal-binding</keyword>
<keyword id="KW-0486">Methionine biosynthesis</keyword>
<keyword id="KW-0862">Zinc</keyword>
<feature type="chain" id="PRO_0000357076" description="Methylthioribulose-1-phosphate dehydratase">
    <location>
        <begin position="1"/>
        <end position="204"/>
    </location>
</feature>
<feature type="binding site" evidence="1">
    <location>
        <position position="94"/>
    </location>
    <ligand>
        <name>Zn(2+)</name>
        <dbReference type="ChEBI" id="CHEBI:29105"/>
    </ligand>
</feature>
<feature type="binding site" evidence="1">
    <location>
        <position position="96"/>
    </location>
    <ligand>
        <name>Zn(2+)</name>
        <dbReference type="ChEBI" id="CHEBI:29105"/>
    </ligand>
</feature>
<proteinExistence type="inferred from homology"/>
<evidence type="ECO:0000255" key="1">
    <source>
        <dbReference type="HAMAP-Rule" id="MF_01677"/>
    </source>
</evidence>
<comment type="function">
    <text evidence="1">Catalyzes the dehydration of methylthioribulose-1-phosphate (MTRu-1-P) into 2,3-diketo-5-methylthiopentyl-1-phosphate (DK-MTP-1-P).</text>
</comment>
<comment type="catalytic activity">
    <reaction evidence="1">
        <text>5-(methylsulfanyl)-D-ribulose 1-phosphate = 5-methylsulfanyl-2,3-dioxopentyl phosphate + H2O</text>
        <dbReference type="Rhea" id="RHEA:15549"/>
        <dbReference type="ChEBI" id="CHEBI:15377"/>
        <dbReference type="ChEBI" id="CHEBI:58548"/>
        <dbReference type="ChEBI" id="CHEBI:58828"/>
        <dbReference type="EC" id="4.2.1.109"/>
    </reaction>
</comment>
<comment type="cofactor">
    <cofactor evidence="1">
        <name>Zn(2+)</name>
        <dbReference type="ChEBI" id="CHEBI:29105"/>
    </cofactor>
    <text evidence="1">Binds 1 zinc ion per subunit.</text>
</comment>
<comment type="pathway">
    <text evidence="1">Amino-acid biosynthesis; L-methionine biosynthesis via salvage pathway; L-methionine from S-methyl-5-thio-alpha-D-ribose 1-phosphate: step 2/6.</text>
</comment>
<comment type="similarity">
    <text evidence="1">Belongs to the aldolase class II family. MtnB subfamily.</text>
</comment>
<dbReference type="EC" id="4.2.1.109" evidence="1"/>
<dbReference type="EMBL" id="CP000653">
    <property type="protein sequence ID" value="ABP59824.1"/>
    <property type="molecule type" value="Genomic_DNA"/>
</dbReference>
<dbReference type="RefSeq" id="WP_012016544.1">
    <property type="nucleotide sequence ID" value="NC_009436.1"/>
</dbReference>
<dbReference type="SMR" id="A4W7Z4"/>
<dbReference type="STRING" id="399742.Ent638_1143"/>
<dbReference type="KEGG" id="ent:Ent638_1143"/>
<dbReference type="eggNOG" id="COG0235">
    <property type="taxonomic scope" value="Bacteria"/>
</dbReference>
<dbReference type="HOGENOM" id="CLU_006033_4_1_6"/>
<dbReference type="OrthoDB" id="9805559at2"/>
<dbReference type="UniPathway" id="UPA00904">
    <property type="reaction ID" value="UER00875"/>
</dbReference>
<dbReference type="Proteomes" id="UP000000230">
    <property type="component" value="Chromosome"/>
</dbReference>
<dbReference type="GO" id="GO:0005737">
    <property type="term" value="C:cytoplasm"/>
    <property type="evidence" value="ECO:0007669"/>
    <property type="project" value="InterPro"/>
</dbReference>
<dbReference type="GO" id="GO:0046570">
    <property type="term" value="F:methylthioribulose 1-phosphate dehydratase activity"/>
    <property type="evidence" value="ECO:0007669"/>
    <property type="project" value="UniProtKB-UniRule"/>
</dbReference>
<dbReference type="GO" id="GO:0008270">
    <property type="term" value="F:zinc ion binding"/>
    <property type="evidence" value="ECO:0007669"/>
    <property type="project" value="UniProtKB-UniRule"/>
</dbReference>
<dbReference type="GO" id="GO:0019509">
    <property type="term" value="P:L-methionine salvage from methylthioadenosine"/>
    <property type="evidence" value="ECO:0007669"/>
    <property type="project" value="UniProtKB-UniRule"/>
</dbReference>
<dbReference type="GO" id="GO:0005996">
    <property type="term" value="P:monosaccharide metabolic process"/>
    <property type="evidence" value="ECO:0007669"/>
    <property type="project" value="UniProtKB-ARBA"/>
</dbReference>
<dbReference type="Gene3D" id="3.40.225.10">
    <property type="entry name" value="Class II aldolase/adducin N-terminal domain"/>
    <property type="match status" value="1"/>
</dbReference>
<dbReference type="HAMAP" id="MF_01677">
    <property type="entry name" value="Salvage_MtnB"/>
    <property type="match status" value="1"/>
</dbReference>
<dbReference type="InterPro" id="IPR001303">
    <property type="entry name" value="Aldolase_II/adducin_N"/>
</dbReference>
<dbReference type="InterPro" id="IPR036409">
    <property type="entry name" value="Aldolase_II/adducin_N_sf"/>
</dbReference>
<dbReference type="InterPro" id="IPR017714">
    <property type="entry name" value="MethylthioRu-1-P_deHdtase_MtnB"/>
</dbReference>
<dbReference type="NCBIfam" id="NF006672">
    <property type="entry name" value="PRK09220.1"/>
    <property type="match status" value="1"/>
</dbReference>
<dbReference type="NCBIfam" id="TIGR03328">
    <property type="entry name" value="salvage_mtnB"/>
    <property type="match status" value="1"/>
</dbReference>
<dbReference type="PANTHER" id="PTHR10640">
    <property type="entry name" value="METHYLTHIORIBULOSE-1-PHOSPHATE DEHYDRATASE"/>
    <property type="match status" value="1"/>
</dbReference>
<dbReference type="PANTHER" id="PTHR10640:SF7">
    <property type="entry name" value="METHYLTHIORIBULOSE-1-PHOSPHATE DEHYDRATASE"/>
    <property type="match status" value="1"/>
</dbReference>
<dbReference type="Pfam" id="PF00596">
    <property type="entry name" value="Aldolase_II"/>
    <property type="match status" value="1"/>
</dbReference>
<dbReference type="SMART" id="SM01007">
    <property type="entry name" value="Aldolase_II"/>
    <property type="match status" value="1"/>
</dbReference>
<dbReference type="SUPFAM" id="SSF53639">
    <property type="entry name" value="AraD/HMP-PK domain-like"/>
    <property type="match status" value="1"/>
</dbReference>
<sequence>MTDNLQLTHLVDACRWIGAKGWAPATGGNMSIRQNDAFCWLSESGKDKGSLTIDDFLQVDIASNRAPSGRKPSAETGLHTLIYRLFPEANAVLHVHTVNATVLSRLVKETELRISGFEMQKSLTGQSTHLDTVTIPVFDNDQDIDALASRIAHYAQERPFNYGFLLRGHGLTCWGRDVAEARRHLEGLEFLFECEMRLRQLEKI</sequence>